<accession>A5TZL0</accession>
<feature type="chain" id="PRO_1000002898" description="UDP-N-acetylenolpyruvoylglucosamine reductase">
    <location>
        <begin position="1"/>
        <end position="369"/>
    </location>
</feature>
<feature type="domain" description="FAD-binding PCMH-type" evidence="1">
    <location>
        <begin position="29"/>
        <end position="202"/>
    </location>
</feature>
<feature type="active site" evidence="1">
    <location>
        <position position="176"/>
    </location>
</feature>
<feature type="active site" description="Proton donor" evidence="1">
    <location>
        <position position="257"/>
    </location>
</feature>
<feature type="active site" evidence="1">
    <location>
        <position position="361"/>
    </location>
</feature>
<dbReference type="EC" id="1.3.1.98" evidence="1"/>
<dbReference type="EMBL" id="CP000611">
    <property type="protein sequence ID" value="ABQ72210.1"/>
    <property type="molecule type" value="Genomic_DNA"/>
</dbReference>
<dbReference type="RefSeq" id="WP_003402354.1">
    <property type="nucleotide sequence ID" value="NZ_CP016972.1"/>
</dbReference>
<dbReference type="SMR" id="A5TZL0"/>
<dbReference type="KEGG" id="mra:MRA_0489"/>
<dbReference type="eggNOG" id="COG0812">
    <property type="taxonomic scope" value="Bacteria"/>
</dbReference>
<dbReference type="HOGENOM" id="CLU_035304_0_1_11"/>
<dbReference type="UniPathway" id="UPA00219"/>
<dbReference type="Proteomes" id="UP000001988">
    <property type="component" value="Chromosome"/>
</dbReference>
<dbReference type="GO" id="GO:0005829">
    <property type="term" value="C:cytosol"/>
    <property type="evidence" value="ECO:0007669"/>
    <property type="project" value="TreeGrafter"/>
</dbReference>
<dbReference type="GO" id="GO:0071949">
    <property type="term" value="F:FAD binding"/>
    <property type="evidence" value="ECO:0007669"/>
    <property type="project" value="InterPro"/>
</dbReference>
<dbReference type="GO" id="GO:0008762">
    <property type="term" value="F:UDP-N-acetylmuramate dehydrogenase activity"/>
    <property type="evidence" value="ECO:0007669"/>
    <property type="project" value="UniProtKB-UniRule"/>
</dbReference>
<dbReference type="GO" id="GO:0051301">
    <property type="term" value="P:cell division"/>
    <property type="evidence" value="ECO:0007669"/>
    <property type="project" value="UniProtKB-KW"/>
</dbReference>
<dbReference type="GO" id="GO:0071555">
    <property type="term" value="P:cell wall organization"/>
    <property type="evidence" value="ECO:0007669"/>
    <property type="project" value="UniProtKB-KW"/>
</dbReference>
<dbReference type="GO" id="GO:0009252">
    <property type="term" value="P:peptidoglycan biosynthetic process"/>
    <property type="evidence" value="ECO:0007669"/>
    <property type="project" value="UniProtKB-UniRule"/>
</dbReference>
<dbReference type="GO" id="GO:0008360">
    <property type="term" value="P:regulation of cell shape"/>
    <property type="evidence" value="ECO:0007669"/>
    <property type="project" value="UniProtKB-KW"/>
</dbReference>
<dbReference type="Gene3D" id="3.30.465.10">
    <property type="match status" value="1"/>
</dbReference>
<dbReference type="Gene3D" id="3.90.78.10">
    <property type="entry name" value="UDP-N-acetylenolpyruvoylglucosamine reductase, C-terminal domain"/>
    <property type="match status" value="1"/>
</dbReference>
<dbReference type="Gene3D" id="3.30.43.10">
    <property type="entry name" value="Uridine Diphospho-n-acetylenolpyruvylglucosamine Reductase, domain 2"/>
    <property type="match status" value="1"/>
</dbReference>
<dbReference type="HAMAP" id="MF_00037">
    <property type="entry name" value="MurB"/>
    <property type="match status" value="1"/>
</dbReference>
<dbReference type="InterPro" id="IPR016166">
    <property type="entry name" value="FAD-bd_PCMH"/>
</dbReference>
<dbReference type="InterPro" id="IPR036318">
    <property type="entry name" value="FAD-bd_PCMH-like_sf"/>
</dbReference>
<dbReference type="InterPro" id="IPR016167">
    <property type="entry name" value="FAD-bd_PCMH_sub1"/>
</dbReference>
<dbReference type="InterPro" id="IPR016169">
    <property type="entry name" value="FAD-bd_PCMH_sub2"/>
</dbReference>
<dbReference type="InterPro" id="IPR003170">
    <property type="entry name" value="MurB"/>
</dbReference>
<dbReference type="InterPro" id="IPR011601">
    <property type="entry name" value="MurB_C"/>
</dbReference>
<dbReference type="InterPro" id="IPR036635">
    <property type="entry name" value="MurB_C_sf"/>
</dbReference>
<dbReference type="InterPro" id="IPR006094">
    <property type="entry name" value="Oxid_FAD_bind_N"/>
</dbReference>
<dbReference type="NCBIfam" id="TIGR00179">
    <property type="entry name" value="murB"/>
    <property type="match status" value="1"/>
</dbReference>
<dbReference type="NCBIfam" id="NF010478">
    <property type="entry name" value="PRK13903.1"/>
    <property type="match status" value="1"/>
</dbReference>
<dbReference type="PANTHER" id="PTHR21071">
    <property type="entry name" value="UDP-N-ACETYLENOLPYRUVOYLGLUCOSAMINE REDUCTASE"/>
    <property type="match status" value="1"/>
</dbReference>
<dbReference type="PANTHER" id="PTHR21071:SF4">
    <property type="entry name" value="UDP-N-ACETYLENOLPYRUVOYLGLUCOSAMINE REDUCTASE"/>
    <property type="match status" value="1"/>
</dbReference>
<dbReference type="Pfam" id="PF01565">
    <property type="entry name" value="FAD_binding_4"/>
    <property type="match status" value="1"/>
</dbReference>
<dbReference type="Pfam" id="PF02873">
    <property type="entry name" value="MurB_C"/>
    <property type="match status" value="1"/>
</dbReference>
<dbReference type="SUPFAM" id="SSF56176">
    <property type="entry name" value="FAD-binding/transporter-associated domain-like"/>
    <property type="match status" value="1"/>
</dbReference>
<dbReference type="SUPFAM" id="SSF56194">
    <property type="entry name" value="Uridine diphospho-N-Acetylenolpyruvylglucosamine reductase, MurB, C-terminal domain"/>
    <property type="match status" value="1"/>
</dbReference>
<dbReference type="PROSITE" id="PS51387">
    <property type="entry name" value="FAD_PCMH"/>
    <property type="match status" value="1"/>
</dbReference>
<gene>
    <name evidence="1" type="primary">murB</name>
    <name type="ordered locus">MRA_0489</name>
</gene>
<name>MURB_MYCTA</name>
<keyword id="KW-0131">Cell cycle</keyword>
<keyword id="KW-0132">Cell division</keyword>
<keyword id="KW-0133">Cell shape</keyword>
<keyword id="KW-0961">Cell wall biogenesis/degradation</keyword>
<keyword id="KW-0963">Cytoplasm</keyword>
<keyword id="KW-0274">FAD</keyword>
<keyword id="KW-0285">Flavoprotein</keyword>
<keyword id="KW-0521">NADP</keyword>
<keyword id="KW-0560">Oxidoreductase</keyword>
<keyword id="KW-0573">Peptidoglycan synthesis</keyword>
<keyword id="KW-1185">Reference proteome</keyword>
<reference key="1">
    <citation type="journal article" date="2008" name="PLoS ONE">
        <title>Genetic basis of virulence attenuation revealed by comparative genomic analysis of Mycobacterium tuberculosis strain H37Ra versus H37Rv.</title>
        <authorList>
            <person name="Zheng H."/>
            <person name="Lu L."/>
            <person name="Wang B."/>
            <person name="Pu S."/>
            <person name="Zhang X."/>
            <person name="Zhu G."/>
            <person name="Shi W."/>
            <person name="Zhang L."/>
            <person name="Wang H."/>
            <person name="Wang S."/>
            <person name="Zhao G."/>
            <person name="Zhang Y."/>
        </authorList>
    </citation>
    <scope>NUCLEOTIDE SEQUENCE [LARGE SCALE GENOMIC DNA]</scope>
    <source>
        <strain>ATCC 25177 / H37Ra</strain>
    </source>
</reference>
<comment type="function">
    <text evidence="1">Cell wall formation.</text>
</comment>
<comment type="catalytic activity">
    <reaction evidence="1">
        <text>UDP-N-acetyl-alpha-D-muramate + NADP(+) = UDP-N-acetyl-3-O-(1-carboxyvinyl)-alpha-D-glucosamine + NADPH + H(+)</text>
        <dbReference type="Rhea" id="RHEA:12248"/>
        <dbReference type="ChEBI" id="CHEBI:15378"/>
        <dbReference type="ChEBI" id="CHEBI:57783"/>
        <dbReference type="ChEBI" id="CHEBI:58349"/>
        <dbReference type="ChEBI" id="CHEBI:68483"/>
        <dbReference type="ChEBI" id="CHEBI:70757"/>
        <dbReference type="EC" id="1.3.1.98"/>
    </reaction>
</comment>
<comment type="cofactor">
    <cofactor evidence="1">
        <name>FAD</name>
        <dbReference type="ChEBI" id="CHEBI:57692"/>
    </cofactor>
</comment>
<comment type="pathway">
    <text evidence="1">Cell wall biogenesis; peptidoglycan biosynthesis.</text>
</comment>
<comment type="subcellular location">
    <subcellularLocation>
        <location evidence="1">Cytoplasm</location>
    </subcellularLocation>
</comment>
<comment type="similarity">
    <text evidence="1">Belongs to the MurB family.</text>
</comment>
<organism>
    <name type="scientific">Mycobacterium tuberculosis (strain ATCC 25177 / H37Ra)</name>
    <dbReference type="NCBI Taxonomy" id="419947"/>
    <lineage>
        <taxon>Bacteria</taxon>
        <taxon>Bacillati</taxon>
        <taxon>Actinomycetota</taxon>
        <taxon>Actinomycetes</taxon>
        <taxon>Mycobacteriales</taxon>
        <taxon>Mycobacteriaceae</taxon>
        <taxon>Mycobacterium</taxon>
        <taxon>Mycobacterium tuberculosis complex</taxon>
    </lineage>
</organism>
<evidence type="ECO:0000255" key="1">
    <source>
        <dbReference type="HAMAP-Rule" id="MF_00037"/>
    </source>
</evidence>
<protein>
    <recommendedName>
        <fullName evidence="1">UDP-N-acetylenolpyruvoylglucosamine reductase</fullName>
        <ecNumber evidence="1">1.3.1.98</ecNumber>
    </recommendedName>
    <alternativeName>
        <fullName evidence="1">UDP-N-acetylmuramate dehydrogenase</fullName>
    </alternativeName>
</protein>
<sequence>MKRSGVGSLFAGAHIAEAVPLAPLTTLRVGPIARRVITCTSAEQVVAALRHLDSAAKTGADRPLVFAGGSNLVIAENLTDLTVVRLANSGITIDGNLVRAEAGAVFDDVVVRAIEQGLGGLECLSGIPGSAGATPVQNVGAYGAEVSDTITRVRLLDRCTGEVRWVSARDLRFGYRTSVLKHADGLAVPTVVLEVEFALDPSGRSAPLRYGELIAALNATSGERADPQAVREAVLALRARKGMVLDPTDHDTWSVGSFFTNPVVTQDVYERLAGDAATRKDGPVPHYPAPDGVKLAAGWLVERAGFGKGYPDAGAAPCRLSTKHALALTNRGGATAEDVVTLARAVRDGVHDVFGITLKPEPVLIGCML</sequence>
<proteinExistence type="inferred from homology"/>